<sequence>MCDKEMCDKEMCEKKEEVDEDIYIASFDIGKVNFAYCIEKCFLKDIKKRTETTIDEMCSKGKIEIIDNVRLVSFPKNIVTRRRGPRKGTTYKPSGKYTFESLLLFLEERKTFWNKCHIFVIEQQMSQNKEGLKISYHLEAYFKTCYGTFKEVVLFPSYHKTQVFEAEKWINLDPLTRKTDKYGKPFYTKMSYNNRKKSCISKALEILEQRHDTDTIWKLERSQKKDDMCDVICQLQAYKWLYLFEK</sequence>
<organismHost>
    <name type="scientific">Acheta domesticus</name>
    <name type="common">House cricket</name>
    <dbReference type="NCBI Taxonomy" id="6997"/>
</organismHost>
<organismHost>
    <name type="scientific">Chilo suppressalis</name>
    <name type="common">Asiatic rice borer moth</name>
    <dbReference type="NCBI Taxonomy" id="168631"/>
</organismHost>
<organismHost>
    <name type="scientific">Gryllus bimaculatus</name>
    <name type="common">Two-spotted cricket</name>
    <dbReference type="NCBI Taxonomy" id="6999"/>
</organismHost>
<organismHost>
    <name type="scientific">Gryllus campestris</name>
    <dbReference type="NCBI Taxonomy" id="58607"/>
</organismHost>
<organismHost>
    <name type="scientific">Spodoptera frugiperda</name>
    <name type="common">Fall armyworm</name>
    <dbReference type="NCBI Taxonomy" id="7108"/>
</organismHost>
<reference key="1">
    <citation type="journal article" date="2001" name="Virology">
        <title>Analysis of the first complete DNA sequence of an invertebrate iridovirus: coding strategy of the genome of Chilo iridescent virus.</title>
        <authorList>
            <person name="Jakob N.J."/>
            <person name="Mueller K."/>
            <person name="Bahr U."/>
            <person name="Darai G."/>
        </authorList>
    </citation>
    <scope>NUCLEOTIDE SEQUENCE [LARGE SCALE GENOMIC DNA]</scope>
</reference>
<reference key="2">
    <citation type="journal article" date="2007" name="Virol. J.">
        <title>Comparative genomic analysis of the family Iridoviridae: re-annotating and defining the core set of iridovirus genes.</title>
        <authorList>
            <person name="Eaton H.E."/>
            <person name="Metcalf J."/>
            <person name="Penny E."/>
            <person name="Tcherepanov V."/>
            <person name="Upton C."/>
            <person name="Brunetti C.R."/>
        </authorList>
    </citation>
    <scope>GENOME REANNOTATION</scope>
</reference>
<proteinExistence type="inferred from homology"/>
<accession>O55763</accession>
<organism>
    <name type="scientific">Invertebrate iridescent virus 6</name>
    <name type="common">IIV-6</name>
    <name type="synonym">Chilo iridescent virus</name>
    <dbReference type="NCBI Taxonomy" id="176652"/>
    <lineage>
        <taxon>Viruses</taxon>
        <taxon>Varidnaviria</taxon>
        <taxon>Bamfordvirae</taxon>
        <taxon>Nucleocytoviricota</taxon>
        <taxon>Megaviricetes</taxon>
        <taxon>Pimascovirales</taxon>
        <taxon>Iridoviridae</taxon>
        <taxon>Betairidovirinae</taxon>
        <taxon>Iridovirus</taxon>
    </lineage>
</organism>
<dbReference type="EMBL" id="AF303741">
    <property type="protein sequence ID" value="AAB94474.1"/>
    <property type="molecule type" value="Genomic_DNA"/>
</dbReference>
<dbReference type="PIR" id="T03176">
    <property type="entry name" value="T03176"/>
</dbReference>
<dbReference type="RefSeq" id="NP_149633.1">
    <property type="nucleotide sequence ID" value="NC_003038.1"/>
</dbReference>
<dbReference type="KEGG" id="vg:1733306"/>
<dbReference type="OrthoDB" id="15522at10239"/>
<dbReference type="Proteomes" id="UP000001359">
    <property type="component" value="Genome"/>
</dbReference>
<dbReference type="GO" id="GO:0003676">
    <property type="term" value="F:nucleic acid binding"/>
    <property type="evidence" value="ECO:0007669"/>
    <property type="project" value="InterPro"/>
</dbReference>
<dbReference type="Gene3D" id="3.30.420.10">
    <property type="entry name" value="Ribonuclease H-like superfamily/Ribonuclease H"/>
    <property type="match status" value="1"/>
</dbReference>
<dbReference type="InterPro" id="IPR012337">
    <property type="entry name" value="RNaseH-like_sf"/>
</dbReference>
<dbReference type="InterPro" id="IPR036397">
    <property type="entry name" value="RNaseH_sf"/>
</dbReference>
<dbReference type="SUPFAM" id="SSF53098">
    <property type="entry name" value="Ribonuclease H-like"/>
    <property type="match status" value="1"/>
</dbReference>
<comment type="similarity">
    <text evidence="1">Belongs to the IIV-6 170L family.</text>
</comment>
<evidence type="ECO:0000305" key="1"/>
<protein>
    <recommendedName>
        <fullName>Uncharacterized protein 170L</fullName>
    </recommendedName>
</protein>
<feature type="chain" id="PRO_0000378019" description="Uncharacterized protein 170L">
    <location>
        <begin position="1"/>
        <end position="246"/>
    </location>
</feature>
<name>VF170_IIV6</name>
<keyword id="KW-1185">Reference proteome</keyword>
<gene>
    <name type="ORF">IIV6-170L</name>
</gene>